<dbReference type="EC" id="1.2.1.27" evidence="1"/>
<dbReference type="EMBL" id="CP001186">
    <property type="protein sequence ID" value="ACK95039.1"/>
    <property type="molecule type" value="Genomic_DNA"/>
</dbReference>
<dbReference type="RefSeq" id="WP_000633340.1">
    <property type="nucleotide sequence ID" value="NC_011772.1"/>
</dbReference>
<dbReference type="SMR" id="B7IW48"/>
<dbReference type="KEGG" id="bcg:BCG9842_B3004"/>
<dbReference type="HOGENOM" id="CLU_005391_1_10_9"/>
<dbReference type="UniPathway" id="UPA00076">
    <property type="reaction ID" value="UER00148"/>
</dbReference>
<dbReference type="Proteomes" id="UP000006744">
    <property type="component" value="Chromosome"/>
</dbReference>
<dbReference type="GO" id="GO:0018478">
    <property type="term" value="F:malonate-semialdehyde dehydrogenase (acetylating) activity"/>
    <property type="evidence" value="ECO:0007669"/>
    <property type="project" value="UniProtKB-UniRule"/>
</dbReference>
<dbReference type="GO" id="GO:0004491">
    <property type="term" value="F:methylmalonate-semialdehyde dehydrogenase (acylating, NAD) activity"/>
    <property type="evidence" value="ECO:0007669"/>
    <property type="project" value="UniProtKB-UniRule"/>
</dbReference>
<dbReference type="GO" id="GO:0019310">
    <property type="term" value="P:inositol catabolic process"/>
    <property type="evidence" value="ECO:0007669"/>
    <property type="project" value="UniProtKB-UniRule"/>
</dbReference>
<dbReference type="GO" id="GO:0006210">
    <property type="term" value="P:thymine catabolic process"/>
    <property type="evidence" value="ECO:0007669"/>
    <property type="project" value="TreeGrafter"/>
</dbReference>
<dbReference type="GO" id="GO:0006574">
    <property type="term" value="P:valine catabolic process"/>
    <property type="evidence" value="ECO:0007669"/>
    <property type="project" value="TreeGrafter"/>
</dbReference>
<dbReference type="CDD" id="cd07085">
    <property type="entry name" value="ALDH_F6_MMSDH"/>
    <property type="match status" value="1"/>
</dbReference>
<dbReference type="FunFam" id="3.40.309.10:FF:000002">
    <property type="entry name" value="Methylmalonate-semialdehyde dehydrogenase (Acylating)"/>
    <property type="match status" value="1"/>
</dbReference>
<dbReference type="FunFam" id="3.40.605.10:FF:000003">
    <property type="entry name" value="Methylmalonate-semialdehyde dehydrogenase [acylating]"/>
    <property type="match status" value="1"/>
</dbReference>
<dbReference type="Gene3D" id="3.40.605.10">
    <property type="entry name" value="Aldehyde Dehydrogenase, Chain A, domain 1"/>
    <property type="match status" value="1"/>
</dbReference>
<dbReference type="Gene3D" id="3.40.309.10">
    <property type="entry name" value="Aldehyde Dehydrogenase, Chain A, domain 2"/>
    <property type="match status" value="1"/>
</dbReference>
<dbReference type="HAMAP" id="MF_01670">
    <property type="entry name" value="IolA"/>
    <property type="match status" value="1"/>
</dbReference>
<dbReference type="InterPro" id="IPR016161">
    <property type="entry name" value="Ald_DH/histidinol_DH"/>
</dbReference>
<dbReference type="InterPro" id="IPR016163">
    <property type="entry name" value="Ald_DH_C"/>
</dbReference>
<dbReference type="InterPro" id="IPR016160">
    <property type="entry name" value="Ald_DH_CS_CYS"/>
</dbReference>
<dbReference type="InterPro" id="IPR016162">
    <property type="entry name" value="Ald_DH_N"/>
</dbReference>
<dbReference type="InterPro" id="IPR015590">
    <property type="entry name" value="Aldehyde_DH_dom"/>
</dbReference>
<dbReference type="InterPro" id="IPR010061">
    <property type="entry name" value="MeMal-semiAld_DH"/>
</dbReference>
<dbReference type="InterPro" id="IPR023510">
    <property type="entry name" value="MSDH_GmP_bac"/>
</dbReference>
<dbReference type="NCBIfam" id="TIGR01722">
    <property type="entry name" value="MMSDH"/>
    <property type="match status" value="1"/>
</dbReference>
<dbReference type="PANTHER" id="PTHR43866">
    <property type="entry name" value="MALONATE-SEMIALDEHYDE DEHYDROGENASE"/>
    <property type="match status" value="1"/>
</dbReference>
<dbReference type="PANTHER" id="PTHR43866:SF4">
    <property type="entry name" value="MALONATE-SEMIALDEHYDE DEHYDROGENASE"/>
    <property type="match status" value="1"/>
</dbReference>
<dbReference type="Pfam" id="PF00171">
    <property type="entry name" value="Aldedh"/>
    <property type="match status" value="1"/>
</dbReference>
<dbReference type="SUPFAM" id="SSF53720">
    <property type="entry name" value="ALDH-like"/>
    <property type="match status" value="1"/>
</dbReference>
<dbReference type="PROSITE" id="PS00070">
    <property type="entry name" value="ALDEHYDE_DEHYDR_CYS"/>
    <property type="match status" value="1"/>
</dbReference>
<evidence type="ECO:0000255" key="1">
    <source>
        <dbReference type="HAMAP-Rule" id="MF_01670"/>
    </source>
</evidence>
<comment type="function">
    <text evidence="1">Catalyzes the oxidation of malonate semialdehyde (MSA) and methylmalonate semialdehyde (MMSA) into acetyl-CoA and propanoyl-CoA, respectively. Is involved in a myo-inositol catabolic pathway. Bicarbonate, and not CO2, is the end-product of the enzymatic reaction.</text>
</comment>
<comment type="catalytic activity">
    <reaction evidence="1">
        <text>3-oxopropanoate + NAD(+) + CoA + H2O = hydrogencarbonate + acetyl-CoA + NADH + H(+)</text>
        <dbReference type="Rhea" id="RHEA:76615"/>
        <dbReference type="ChEBI" id="CHEBI:15377"/>
        <dbReference type="ChEBI" id="CHEBI:15378"/>
        <dbReference type="ChEBI" id="CHEBI:17544"/>
        <dbReference type="ChEBI" id="CHEBI:33190"/>
        <dbReference type="ChEBI" id="CHEBI:57287"/>
        <dbReference type="ChEBI" id="CHEBI:57288"/>
        <dbReference type="ChEBI" id="CHEBI:57540"/>
        <dbReference type="ChEBI" id="CHEBI:57945"/>
        <dbReference type="EC" id="1.2.1.27"/>
    </reaction>
    <physiologicalReaction direction="left-to-right" evidence="1">
        <dbReference type="Rhea" id="RHEA:76616"/>
    </physiologicalReaction>
</comment>
<comment type="catalytic activity">
    <reaction evidence="1">
        <text>2-methyl-3-oxopropanoate + NAD(+) + CoA + H2O = propanoyl-CoA + hydrogencarbonate + NADH + H(+)</text>
        <dbReference type="Rhea" id="RHEA:20804"/>
        <dbReference type="ChEBI" id="CHEBI:15377"/>
        <dbReference type="ChEBI" id="CHEBI:15378"/>
        <dbReference type="ChEBI" id="CHEBI:17544"/>
        <dbReference type="ChEBI" id="CHEBI:57287"/>
        <dbReference type="ChEBI" id="CHEBI:57392"/>
        <dbReference type="ChEBI" id="CHEBI:57540"/>
        <dbReference type="ChEBI" id="CHEBI:57700"/>
        <dbReference type="ChEBI" id="CHEBI:57945"/>
        <dbReference type="EC" id="1.2.1.27"/>
    </reaction>
    <physiologicalReaction direction="left-to-right" evidence="1">
        <dbReference type="Rhea" id="RHEA:20805"/>
    </physiologicalReaction>
</comment>
<comment type="pathway">
    <text evidence="1">Polyol metabolism; myo-inositol degradation into acetyl-CoA; acetyl-CoA from myo-inositol: step 7/7.</text>
</comment>
<comment type="subunit">
    <text evidence="1">Homotetramer.</text>
</comment>
<comment type="similarity">
    <text evidence="1">Belongs to the aldehyde dehydrogenase family. IolA subfamily.</text>
</comment>
<gene>
    <name evidence="1" type="primary">iolA</name>
    <name type="ordered locus">BCG9842_B3004</name>
</gene>
<protein>
    <recommendedName>
        <fullName evidence="1">Malonate-semialdehyde dehydrogenase</fullName>
        <shortName evidence="1">MSA dehydrogenase</shortName>
        <ecNumber evidence="1">1.2.1.27</ecNumber>
    </recommendedName>
    <alternativeName>
        <fullName evidence="1">Methylmalonate-semialdehyde dehydrogenase</fullName>
        <shortName evidence="1">MMSA dehydrogenase</shortName>
        <shortName evidence="1">MSDH</shortName>
    </alternativeName>
</protein>
<sequence>MITTEIKRVKNHINGEWVESTGTEVEAVPNPATGKIIAYVPLSPKEDVEKAVEAAKAAFETWSKVPVPNRSRNLYKYLQLLQENKDELAKIITLENGKTLTDATGEVQRGIEAVELATSAPNLMMGQALPNIASGIDGSIWRYPIGVVAGITPFNFPMMIPLWMFPLAIACGNTFVLKTSERTPLLAERLVELFYEAGFPKGVLNLVQGGKDVVNSILENKDIQAVSFVGSEPVARYVYETGTKHGKRVQALAGAKNHAIVMPDCNLEKTVQGVIGSAFASSGERCMACSVVAVVDEIADEFIDVLVAETKKLKVGDGFNEDNYVGPLIRESHKERVLGYISSGVADGATLLVDGRKINEEVGEGYFVGATIFDGVNQEMKIWQDEIFAPVLSIVRVKDLEEGIKLTNQSKFANGAVIYTSNGKHAQTFRDNIDAGMIGVNVNVPAPMAFFAFAGNKASFFGDLGTNGTDGVQFYTRKKVVTERWF</sequence>
<feature type="chain" id="PRO_1000187311" description="Malonate-semialdehyde dehydrogenase">
    <location>
        <begin position="1"/>
        <end position="486"/>
    </location>
</feature>
<feature type="active site" description="Nucleophile" evidence="1">
    <location>
        <position position="286"/>
    </location>
</feature>
<feature type="binding site" evidence="1">
    <location>
        <position position="154"/>
    </location>
    <ligand>
        <name>NAD(+)</name>
        <dbReference type="ChEBI" id="CHEBI:57540"/>
    </ligand>
</feature>
<feature type="binding site" evidence="1">
    <location>
        <position position="178"/>
    </location>
    <ligand>
        <name>NAD(+)</name>
        <dbReference type="ChEBI" id="CHEBI:57540"/>
    </ligand>
</feature>
<feature type="binding site" evidence="1">
    <location>
        <position position="181"/>
    </location>
    <ligand>
        <name>NAD(+)</name>
        <dbReference type="ChEBI" id="CHEBI:57540"/>
    </ligand>
</feature>
<feature type="binding site" evidence="1">
    <location>
        <position position="182"/>
    </location>
    <ligand>
        <name>NAD(+)</name>
        <dbReference type="ChEBI" id="CHEBI:57540"/>
    </ligand>
</feature>
<feature type="binding site" evidence="1">
    <location>
        <position position="231"/>
    </location>
    <ligand>
        <name>NAD(+)</name>
        <dbReference type="ChEBI" id="CHEBI:57540"/>
    </ligand>
</feature>
<feature type="binding site" evidence="1">
    <location>
        <position position="386"/>
    </location>
    <ligand>
        <name>NAD(+)</name>
        <dbReference type="ChEBI" id="CHEBI:57540"/>
    </ligand>
</feature>
<proteinExistence type="inferred from homology"/>
<accession>B7IW48</accession>
<reference key="1">
    <citation type="submission" date="2008-10" db="EMBL/GenBank/DDBJ databases">
        <title>Genome sequence of Bacillus cereus G9842.</title>
        <authorList>
            <person name="Dodson R.J."/>
            <person name="Durkin A.S."/>
            <person name="Rosovitz M.J."/>
            <person name="Rasko D.A."/>
            <person name="Hoffmaster A."/>
            <person name="Ravel J."/>
            <person name="Sutton G."/>
        </authorList>
    </citation>
    <scope>NUCLEOTIDE SEQUENCE [LARGE SCALE GENOMIC DNA]</scope>
    <source>
        <strain>G9842</strain>
    </source>
</reference>
<organism>
    <name type="scientific">Bacillus cereus (strain G9842)</name>
    <dbReference type="NCBI Taxonomy" id="405531"/>
    <lineage>
        <taxon>Bacteria</taxon>
        <taxon>Bacillati</taxon>
        <taxon>Bacillota</taxon>
        <taxon>Bacilli</taxon>
        <taxon>Bacillales</taxon>
        <taxon>Bacillaceae</taxon>
        <taxon>Bacillus</taxon>
        <taxon>Bacillus cereus group</taxon>
    </lineage>
</organism>
<keyword id="KW-0520">NAD</keyword>
<keyword id="KW-0560">Oxidoreductase</keyword>
<name>IOLA_BACC2</name>